<sequence>MNTDYTPLVNVPIKREDIETCRFSNWYPLFKKHCPTAEIIGPLPAEFIEYLEQDGIKIPNENRSFYSEDLTINDDNEYSDWDNEDDDEEEDKVIQQEVKKEIDPLADFPELHRQIKDVITKYGAVAPKMNWSAPKDATWILPNNTMKCNEINEVYLLLNASNYIAHDLQHAFDECEDIEDQKKSSDFELVLRKWFDINPALEFRIFIKDNEILGISQRDLNYYDYLEPLVDKFRDLIEDFIDDEILDRFPLKSFVIDLYIPRPFNKVFLIDINPFARMTDPLMFSWSELLTKNEPVTPIGQEEDYEFRLIKENNVGRFACKEHSENQVPTDIVEASLNPEAIRELTQKWKELLSKQSMEEDSSSDSNEE</sequence>
<accession>A7TPB3</accession>
<keyword id="KW-0067">ATP-binding</keyword>
<keyword id="KW-0143">Chaperone</keyword>
<keyword id="KW-0963">Cytoplasm</keyword>
<keyword id="KW-0460">Magnesium</keyword>
<keyword id="KW-0479">Metal-binding</keyword>
<keyword id="KW-0547">Nucleotide-binding</keyword>
<keyword id="KW-1185">Reference proteome</keyword>
<proteinExistence type="inferred from homology"/>
<evidence type="ECO:0000250" key="1">
    <source>
        <dbReference type="UniProtKB" id="O75794"/>
    </source>
</evidence>
<evidence type="ECO:0000250" key="2">
    <source>
        <dbReference type="UniProtKB" id="Q05791"/>
    </source>
</evidence>
<evidence type="ECO:0000250" key="3">
    <source>
        <dbReference type="UniProtKB" id="Q9P7N5"/>
    </source>
</evidence>
<evidence type="ECO:0000305" key="4"/>
<feature type="chain" id="PRO_0000350950" description="Translation initiation factor eIF2 assembly protein">
    <location>
        <begin position="1"/>
        <end position="369"/>
    </location>
</feature>
<feature type="binding site" evidence="1">
    <location>
        <position position="128"/>
    </location>
    <ligand>
        <name>ATP</name>
        <dbReference type="ChEBI" id="CHEBI:30616"/>
    </ligand>
</feature>
<feature type="binding site" evidence="1">
    <location>
        <position position="131"/>
    </location>
    <ligand>
        <name>ATP</name>
        <dbReference type="ChEBI" id="CHEBI:30616"/>
    </ligand>
</feature>
<feature type="binding site" evidence="1">
    <location>
        <position position="133"/>
    </location>
    <ligand>
        <name>ATP</name>
        <dbReference type="ChEBI" id="CHEBI:30616"/>
    </ligand>
</feature>
<feature type="binding site" evidence="3">
    <location>
        <position position="135"/>
    </location>
    <ligand>
        <name>ATP</name>
        <dbReference type="ChEBI" id="CHEBI:30616"/>
    </ligand>
</feature>
<feature type="binding site" evidence="3">
    <location>
        <position position="192"/>
    </location>
    <ligand>
        <name>ATP</name>
        <dbReference type="ChEBI" id="CHEBI:30616"/>
    </ligand>
</feature>
<feature type="binding site" evidence="1">
    <location>
        <position position="193"/>
    </location>
    <ligand>
        <name>ATP</name>
        <dbReference type="ChEBI" id="CHEBI:30616"/>
    </ligand>
</feature>
<feature type="binding site" evidence="3">
    <location>
        <position position="194"/>
    </location>
    <ligand>
        <name>ATP</name>
        <dbReference type="ChEBI" id="CHEBI:30616"/>
    </ligand>
</feature>
<feature type="binding site" evidence="3">
    <location>
        <position position="195"/>
    </location>
    <ligand>
        <name>ATP</name>
        <dbReference type="ChEBI" id="CHEBI:30616"/>
    </ligand>
</feature>
<feature type="binding site" evidence="1">
    <location>
        <position position="202"/>
    </location>
    <ligand>
        <name>ATP</name>
        <dbReference type="ChEBI" id="CHEBI:30616"/>
    </ligand>
</feature>
<feature type="binding site" evidence="1">
    <location>
        <position position="204"/>
    </location>
    <ligand>
        <name>ATP</name>
        <dbReference type="ChEBI" id="CHEBI:30616"/>
    </ligand>
</feature>
<feature type="binding site" evidence="1">
    <location>
        <position position="218"/>
    </location>
    <ligand>
        <name>ATP</name>
        <dbReference type="ChEBI" id="CHEBI:30616"/>
    </ligand>
</feature>
<feature type="binding site" evidence="3">
    <location>
        <position position="257"/>
    </location>
    <ligand>
        <name>ATP</name>
        <dbReference type="ChEBI" id="CHEBI:30616"/>
    </ligand>
</feature>
<feature type="binding site" evidence="1">
    <location>
        <position position="271"/>
    </location>
    <ligand>
        <name>ATP</name>
        <dbReference type="ChEBI" id="CHEBI:30616"/>
    </ligand>
</feature>
<feature type="binding site" evidence="1">
    <location>
        <position position="271"/>
    </location>
    <ligand>
        <name>Mg(2+)</name>
        <dbReference type="ChEBI" id="CHEBI:18420"/>
    </ligand>
</feature>
<feature type="binding site" evidence="1">
    <location>
        <position position="273"/>
    </location>
    <ligand>
        <name>ATP</name>
        <dbReference type="ChEBI" id="CHEBI:30616"/>
    </ligand>
</feature>
<feature type="binding site" evidence="1">
    <location>
        <position position="273"/>
    </location>
    <ligand>
        <name>Mg(2+)</name>
        <dbReference type="ChEBI" id="CHEBI:18420"/>
    </ligand>
</feature>
<gene>
    <name type="primary">CDC123</name>
    <name type="ORF">Kpol_1019p20</name>
</gene>
<reference key="1">
    <citation type="journal article" date="2007" name="Proc. Natl. Acad. Sci. U.S.A.">
        <title>Independent sorting-out of thousands of duplicated gene pairs in two yeast species descended from a whole-genome duplication.</title>
        <authorList>
            <person name="Scannell D.R."/>
            <person name="Frank A.C."/>
            <person name="Conant G.C."/>
            <person name="Byrne K.P."/>
            <person name="Woolfit M."/>
            <person name="Wolfe K.H."/>
        </authorList>
    </citation>
    <scope>NUCLEOTIDE SEQUENCE [LARGE SCALE GENOMIC DNA]</scope>
    <source>
        <strain>ATCC 22028 / DSM 70294 / BCRC 21397 / CBS 2163 / NBRC 10782 / NRRL Y-8283 / UCD 57-17</strain>
    </source>
</reference>
<comment type="function">
    <text evidence="2">ATP-dependent protein-folding chaperone for the eIF2 complex. Binds to the gamma subunit of the eIF2 complex which allows the subunit to assemble with the alpha and beta subunits.</text>
</comment>
<comment type="subcellular location">
    <subcellularLocation>
        <location evidence="2">Cytoplasm</location>
    </subcellularLocation>
</comment>
<comment type="similarity">
    <text evidence="4">Belongs to the CDC123 family.</text>
</comment>
<organism>
    <name type="scientific">Vanderwaltozyma polyspora (strain ATCC 22028 / DSM 70294 / BCRC 21397 / CBS 2163 / NBRC 10782 / NRRL Y-8283 / UCD 57-17)</name>
    <name type="common">Kluyveromyces polysporus</name>
    <dbReference type="NCBI Taxonomy" id="436907"/>
    <lineage>
        <taxon>Eukaryota</taxon>
        <taxon>Fungi</taxon>
        <taxon>Dikarya</taxon>
        <taxon>Ascomycota</taxon>
        <taxon>Saccharomycotina</taxon>
        <taxon>Saccharomycetes</taxon>
        <taxon>Saccharomycetales</taxon>
        <taxon>Saccharomycetaceae</taxon>
        <taxon>Vanderwaltozyma</taxon>
    </lineage>
</organism>
<protein>
    <recommendedName>
        <fullName evidence="4">Translation initiation factor eIF2 assembly protein</fullName>
    </recommendedName>
    <alternativeName>
        <fullName>Cell division cycle protein 123</fullName>
    </alternativeName>
</protein>
<name>CD123_VANPO</name>
<dbReference type="EMBL" id="DS480440">
    <property type="protein sequence ID" value="EDO15900.1"/>
    <property type="molecule type" value="Genomic_DNA"/>
</dbReference>
<dbReference type="RefSeq" id="XP_001643758.1">
    <property type="nucleotide sequence ID" value="XM_001643708.1"/>
</dbReference>
<dbReference type="SMR" id="A7TPB3"/>
<dbReference type="FunCoup" id="A7TPB3">
    <property type="interactions" value="778"/>
</dbReference>
<dbReference type="STRING" id="436907.A7TPB3"/>
<dbReference type="GeneID" id="5544007"/>
<dbReference type="KEGG" id="vpo:Kpol_1019p20"/>
<dbReference type="eggNOG" id="KOG2983">
    <property type="taxonomic scope" value="Eukaryota"/>
</dbReference>
<dbReference type="HOGENOM" id="CLU_034402_2_0_1"/>
<dbReference type="InParanoid" id="A7TPB3"/>
<dbReference type="OMA" id="TFPDPNF"/>
<dbReference type="OrthoDB" id="360540at2759"/>
<dbReference type="PhylomeDB" id="A7TPB3"/>
<dbReference type="Proteomes" id="UP000000267">
    <property type="component" value="Unassembled WGS sequence"/>
</dbReference>
<dbReference type="GO" id="GO:0005737">
    <property type="term" value="C:cytoplasm"/>
    <property type="evidence" value="ECO:0000250"/>
    <property type="project" value="UniProtKB"/>
</dbReference>
<dbReference type="GO" id="GO:0005524">
    <property type="term" value="F:ATP binding"/>
    <property type="evidence" value="ECO:0000250"/>
    <property type="project" value="UniProtKB"/>
</dbReference>
<dbReference type="GO" id="GO:0000287">
    <property type="term" value="F:magnesium ion binding"/>
    <property type="evidence" value="ECO:0000250"/>
    <property type="project" value="UniProtKB"/>
</dbReference>
<dbReference type="GO" id="GO:0044183">
    <property type="term" value="F:protein folding chaperone"/>
    <property type="evidence" value="ECO:0000250"/>
    <property type="project" value="UniProtKB"/>
</dbReference>
<dbReference type="GO" id="GO:1905143">
    <property type="term" value="P:eukaryotic translation initiation factor 2 complex assembly"/>
    <property type="evidence" value="ECO:0000250"/>
    <property type="project" value="UniProtKB"/>
</dbReference>
<dbReference type="InterPro" id="IPR009772">
    <property type="entry name" value="CDC123"/>
</dbReference>
<dbReference type="PANTHER" id="PTHR15323:SF6">
    <property type="entry name" value="CELL DIVISION CYCLE PROTEIN 123 HOMOLOG"/>
    <property type="match status" value="1"/>
</dbReference>
<dbReference type="PANTHER" id="PTHR15323">
    <property type="entry name" value="D123 PROTEIN"/>
    <property type="match status" value="1"/>
</dbReference>
<dbReference type="Pfam" id="PF07065">
    <property type="entry name" value="D123"/>
    <property type="match status" value="1"/>
</dbReference>
<dbReference type="PIRSF" id="PIRSF007807">
    <property type="entry name" value="Cdc123"/>
    <property type="match status" value="1"/>
</dbReference>